<reference key="1">
    <citation type="journal article" date="2004" name="Science">
        <title>The genome of the diatom Thalassiosira pseudonana: ecology, evolution, and metabolism.</title>
        <authorList>
            <person name="Armbrust E.V."/>
            <person name="Berges J.A."/>
            <person name="Bowler C."/>
            <person name="Green B.R."/>
            <person name="Martinez D."/>
            <person name="Putnam N.H."/>
            <person name="Zhou S."/>
            <person name="Allen A.E."/>
            <person name="Apt K.E."/>
            <person name="Bechner M."/>
            <person name="Brzezinski M.A."/>
            <person name="Chaal B.K."/>
            <person name="Chiovitti A."/>
            <person name="Davis A.K."/>
            <person name="Demarest M.S."/>
            <person name="Detter J.C."/>
            <person name="Glavina T."/>
            <person name="Goodstein D."/>
            <person name="Hadi M.Z."/>
            <person name="Hellsten U."/>
            <person name="Hildebrand M."/>
            <person name="Jenkins B.D."/>
            <person name="Jurka J."/>
            <person name="Kapitonov V.V."/>
            <person name="Kroger N."/>
            <person name="Lau W.W."/>
            <person name="Lane T.W."/>
            <person name="Larimer F.W."/>
            <person name="Lippmeier J.C."/>
            <person name="Lucas S."/>
            <person name="Medina M."/>
            <person name="Montsant A."/>
            <person name="Obornik M."/>
            <person name="Parker M.S."/>
            <person name="Palenik B."/>
            <person name="Pazour G.J."/>
            <person name="Richardson P.M."/>
            <person name="Rynearson T.A."/>
            <person name="Saito M.A."/>
            <person name="Schwartz D.C."/>
            <person name="Thamatrakoln K."/>
            <person name="Valentin K."/>
            <person name="Vardi A."/>
            <person name="Wilkerson F.P."/>
            <person name="Rokhsar D.S."/>
        </authorList>
    </citation>
    <scope>NUCLEOTIDE SEQUENCE [LARGE SCALE GENOMIC DNA]</scope>
    <source>
        <strain>CCMP1335 / NEPCC58 / CCAP 1085/12</strain>
    </source>
</reference>
<reference key="2">
    <citation type="submission" date="2008-09" db="EMBL/GenBank/DDBJ databases">
        <authorList>
            <consortium name="Diatom Consortium"/>
            <person name="Grigoriev I."/>
            <person name="Grimwood J."/>
            <person name="Kuo A."/>
            <person name="Otillar R.P."/>
            <person name="Salamov A."/>
            <person name="Detter J.C."/>
            <person name="Schmutz J."/>
            <person name="Lindquist E."/>
            <person name="Shapiro H."/>
            <person name="Lucas S."/>
            <person name="Glavina del Rio T."/>
            <person name="Bruce D."/>
            <person name="Pitluck S."/>
            <person name="Rokhsar D."/>
            <person name="Armbrust V."/>
        </authorList>
    </citation>
    <scope>GENOME REANNOTATION</scope>
    <source>
        <strain>CCMP1335 / NEPCC58 / CCAP 1085/12</strain>
    </source>
</reference>
<accession>B8LBM8</accession>
<protein>
    <recommendedName>
        <fullName evidence="1">RNA-splicing ligase RtcB homolog</fullName>
        <ecNumber evidence="1">6.5.1.8</ecNumber>
    </recommendedName>
    <alternativeName>
        <fullName evidence="1">3'-phosphate/5'-hydroxy nucleic acid ligase</fullName>
    </alternativeName>
</protein>
<evidence type="ECO:0000255" key="1">
    <source>
        <dbReference type="HAMAP-Rule" id="MF_03144"/>
    </source>
</evidence>
<proteinExistence type="inferred from homology"/>
<organism>
    <name type="scientific">Thalassiosira pseudonana</name>
    <name type="common">Marine diatom</name>
    <name type="synonym">Cyclotella nana</name>
    <dbReference type="NCBI Taxonomy" id="35128"/>
    <lineage>
        <taxon>Eukaryota</taxon>
        <taxon>Sar</taxon>
        <taxon>Stramenopiles</taxon>
        <taxon>Ochrophyta</taxon>
        <taxon>Bacillariophyta</taxon>
        <taxon>Coscinodiscophyceae</taxon>
        <taxon>Thalassiosirophycidae</taxon>
        <taxon>Thalassiosirales</taxon>
        <taxon>Thalassiosiraceae</taxon>
        <taxon>Thalassiosira</taxon>
    </lineage>
</organism>
<sequence>MKVPAEIFVNNDLQTLLVQELHDTCCGSREEADSAFIPALRQAANVAALPGIVKASLAMPDVHSGYGFCIGNVAAFDMDDPQAVISPGGVGFDINCGVRLIRTNLTEKDVEGSVREELAEALFRNIPVGVGVSGGIPCSIDDLDQLLRNGVDWAIEKGYAWEEDKDHCEENGCMETADPNCVSKRAKKRGLKQLGTLGAGNHYTEIQVVDEVYNTEAAKIMGIGTVGQVCIMIHTGSRGLGHQVATDALQVMEEAMCRDAIDLNDRQLSCARISSKEGREYLAAMSAAANFAWVNRSCITYLARKAFSEVFQRESDDMDMHLVYDVCHNIAKVEQHIVDGEQKTLLVHRKGSTRAYPPCHPDIPKDYQTIGQPVLIGGTMGTCSYVLVGTDKGMAETFGSTCHGAGRALSRNQSRIKLDHNQVLNKLKEDGIAIRVASPKLVTEEAPESYKNVCDVIETCQVAGISEKVVKLRPIAVIKG</sequence>
<dbReference type="EC" id="6.5.1.8" evidence="1"/>
<dbReference type="EMBL" id="DS999415">
    <property type="protein sequence ID" value="EED87076.1"/>
    <property type="molecule type" value="Genomic_DNA"/>
</dbReference>
<dbReference type="RefSeq" id="XP_002296380.1">
    <property type="nucleotide sequence ID" value="XM_002296344.1"/>
</dbReference>
<dbReference type="SMR" id="B8LBM8"/>
<dbReference type="FunCoup" id="B8LBM8">
    <property type="interactions" value="230"/>
</dbReference>
<dbReference type="STRING" id="35128.B8LBM8"/>
<dbReference type="PaxDb" id="35128-Thaps41953"/>
<dbReference type="EnsemblProtists" id="EED87076">
    <property type="protein sequence ID" value="EED87076"/>
    <property type="gene ID" value="THAPSDRAFT_41953"/>
</dbReference>
<dbReference type="GeneID" id="7443254"/>
<dbReference type="KEGG" id="tps:THAPSDRAFT_41953"/>
<dbReference type="eggNOG" id="KOG3833">
    <property type="taxonomic scope" value="Eukaryota"/>
</dbReference>
<dbReference type="InParanoid" id="B8LBM8"/>
<dbReference type="OMA" id="QTRGVEC"/>
<dbReference type="Proteomes" id="UP000001449">
    <property type="component" value="Unassembled WGS sequence"/>
</dbReference>
<dbReference type="GO" id="GO:0005634">
    <property type="term" value="C:nucleus"/>
    <property type="evidence" value="ECO:0000318"/>
    <property type="project" value="GO_Central"/>
</dbReference>
<dbReference type="GO" id="GO:0072669">
    <property type="term" value="C:tRNA-splicing ligase complex"/>
    <property type="evidence" value="ECO:0000318"/>
    <property type="project" value="GO_Central"/>
</dbReference>
<dbReference type="GO" id="GO:0005525">
    <property type="term" value="F:GTP binding"/>
    <property type="evidence" value="ECO:0007669"/>
    <property type="project" value="UniProtKB-KW"/>
</dbReference>
<dbReference type="GO" id="GO:0046872">
    <property type="term" value="F:metal ion binding"/>
    <property type="evidence" value="ECO:0007669"/>
    <property type="project" value="UniProtKB-KW"/>
</dbReference>
<dbReference type="GO" id="GO:0170057">
    <property type="term" value="F:RNA ligase (GTP) activity"/>
    <property type="evidence" value="ECO:0007669"/>
    <property type="project" value="UniProtKB-EC"/>
</dbReference>
<dbReference type="GO" id="GO:0006388">
    <property type="term" value="P:tRNA splicing, via endonucleolytic cleavage and ligation"/>
    <property type="evidence" value="ECO:0000318"/>
    <property type="project" value="GO_Central"/>
</dbReference>
<dbReference type="FunFam" id="3.90.1860.10:FF:000001">
    <property type="entry name" value="tRNA-splicing ligase RtcB homolog"/>
    <property type="match status" value="1"/>
</dbReference>
<dbReference type="Gene3D" id="3.90.1860.10">
    <property type="entry name" value="tRNA-splicing ligase RtcB"/>
    <property type="match status" value="1"/>
</dbReference>
<dbReference type="HAMAP" id="MF_03144">
    <property type="entry name" value="RtcB_euk"/>
    <property type="match status" value="1"/>
</dbReference>
<dbReference type="InterPro" id="IPR001233">
    <property type="entry name" value="RtcB"/>
</dbReference>
<dbReference type="InterPro" id="IPR036025">
    <property type="entry name" value="RtcB-like_sf"/>
</dbReference>
<dbReference type="InterPro" id="IPR027513">
    <property type="entry name" value="RtcB_euk"/>
</dbReference>
<dbReference type="PANTHER" id="PTHR11118">
    <property type="entry name" value="RNA-SPLICING LIGASE RTCB HOMOLOG"/>
    <property type="match status" value="1"/>
</dbReference>
<dbReference type="PANTHER" id="PTHR11118:SF1">
    <property type="entry name" value="RNA-SPLICING LIGASE RTCB HOMOLOG"/>
    <property type="match status" value="1"/>
</dbReference>
<dbReference type="Pfam" id="PF01139">
    <property type="entry name" value="RtcB"/>
    <property type="match status" value="1"/>
</dbReference>
<dbReference type="SUPFAM" id="SSF103365">
    <property type="entry name" value="Hypothetical protein PH1602"/>
    <property type="match status" value="1"/>
</dbReference>
<comment type="function">
    <text evidence="1">Catalytic subunit of the tRNA-splicing ligase complex that acts by directly joining spliced tRNA halves to mature-sized tRNAs by incorporating the precursor-derived splice junction phosphate into the mature tRNA as a canonical 3',5'-phosphodiester. May act as an RNA ligase with broad substrate specificity, and may function toward other RNAs.</text>
</comment>
<comment type="catalytic activity">
    <reaction evidence="1">
        <text>a 3'-end 3'-phospho-ribonucleotide-RNA + a 5'-end dephospho-ribonucleoside-RNA + GTP = a ribonucleotidyl-ribonucleotide-RNA + GMP + diphosphate</text>
        <dbReference type="Rhea" id="RHEA:68076"/>
        <dbReference type="Rhea" id="RHEA-COMP:10463"/>
        <dbReference type="Rhea" id="RHEA-COMP:13936"/>
        <dbReference type="Rhea" id="RHEA-COMP:17355"/>
        <dbReference type="ChEBI" id="CHEBI:33019"/>
        <dbReference type="ChEBI" id="CHEBI:37565"/>
        <dbReference type="ChEBI" id="CHEBI:58115"/>
        <dbReference type="ChEBI" id="CHEBI:83062"/>
        <dbReference type="ChEBI" id="CHEBI:138284"/>
        <dbReference type="ChEBI" id="CHEBI:173118"/>
        <dbReference type="EC" id="6.5.1.8"/>
    </reaction>
</comment>
<comment type="catalytic activity">
    <reaction evidence="1">
        <text>a 3'-end 2',3'-cyclophospho-ribonucleotide-RNA + a 5'-end dephospho-ribonucleoside-RNA + GTP + H2O = a ribonucleotidyl-ribonucleotide-RNA + GMP + diphosphate + H(+)</text>
        <dbReference type="Rhea" id="RHEA:68080"/>
        <dbReference type="Rhea" id="RHEA-COMP:10464"/>
        <dbReference type="Rhea" id="RHEA-COMP:13936"/>
        <dbReference type="Rhea" id="RHEA-COMP:17355"/>
        <dbReference type="ChEBI" id="CHEBI:15377"/>
        <dbReference type="ChEBI" id="CHEBI:15378"/>
        <dbReference type="ChEBI" id="CHEBI:33019"/>
        <dbReference type="ChEBI" id="CHEBI:37565"/>
        <dbReference type="ChEBI" id="CHEBI:58115"/>
        <dbReference type="ChEBI" id="CHEBI:83064"/>
        <dbReference type="ChEBI" id="CHEBI:138284"/>
        <dbReference type="ChEBI" id="CHEBI:173118"/>
        <dbReference type="EC" id="6.5.1.8"/>
    </reaction>
</comment>
<comment type="cofactor">
    <cofactor evidence="1">
        <name>Mn(2+)</name>
        <dbReference type="ChEBI" id="CHEBI:29035"/>
    </cofactor>
    <text evidence="1">Binds 2 manganese ions per subunit.</text>
</comment>
<comment type="subunit">
    <text evidence="1">Catalytic component of the tRNA-splicing ligase complex.</text>
</comment>
<comment type="miscellaneous">
    <text evidence="1">Ligation probably proceeds through 3 nucleotidyl transfer steps, with 2',3'-cyclic phosphate termini being hydrolyzed to 3'-P termini in a step that precedes 3'-P activation with GMP. In the first nucleotidyl transfer step, RTCB reacts with GTP to form a covalent RTCB-histidine-GMP intermediate with release of PPi; in the second step, the GMP moiety is transferred to the RNA 3'-P; in the third step, the 5'-OH from the opposite RNA strand attacks the activated 3'-P to form a 3',5'-phosphodiester bond and release GMP.</text>
</comment>
<comment type="similarity">
    <text evidence="1">Belongs to the RtcB family.</text>
</comment>
<keyword id="KW-0342">GTP-binding</keyword>
<keyword id="KW-0436">Ligase</keyword>
<keyword id="KW-0464">Manganese</keyword>
<keyword id="KW-0479">Metal-binding</keyword>
<keyword id="KW-0547">Nucleotide-binding</keyword>
<keyword id="KW-1185">Reference proteome</keyword>
<keyword id="KW-0819">tRNA processing</keyword>
<gene>
    <name type="ORF">THAPSDRAFT_41953</name>
</gene>
<feature type="chain" id="PRO_0000407244" description="RNA-splicing ligase RtcB homolog">
    <location>
        <begin position="1"/>
        <end position="480"/>
    </location>
</feature>
<feature type="active site" description="GMP-histidine intermediate" evidence="1">
    <location>
        <position position="403"/>
    </location>
</feature>
<feature type="binding site" evidence="1">
    <location>
        <position position="93"/>
    </location>
    <ligand>
        <name>Mn(2+)</name>
        <dbReference type="ChEBI" id="CHEBI:29035"/>
        <label>1</label>
    </ligand>
</feature>
<feature type="binding site" evidence="1">
    <location>
        <position position="96"/>
    </location>
    <ligand>
        <name>Mn(2+)</name>
        <dbReference type="ChEBI" id="CHEBI:29035"/>
        <label>1</label>
    </ligand>
</feature>
<feature type="binding site" evidence="1">
    <location>
        <position position="96"/>
    </location>
    <ligand>
        <name>Mn(2+)</name>
        <dbReference type="ChEBI" id="CHEBI:29035"/>
        <label>2</label>
    </ligand>
</feature>
<feature type="binding site" evidence="1">
    <location>
        <begin position="201"/>
        <end position="205"/>
    </location>
    <ligand>
        <name>GMP</name>
        <dbReference type="ChEBI" id="CHEBI:58115"/>
    </ligand>
</feature>
<feature type="binding site" evidence="1">
    <location>
        <position position="202"/>
    </location>
    <ligand>
        <name>Mn(2+)</name>
        <dbReference type="ChEBI" id="CHEBI:29035"/>
        <label>1</label>
    </ligand>
</feature>
<feature type="binding site" evidence="1">
    <location>
        <position position="234"/>
    </location>
    <ligand>
        <name>Mn(2+)</name>
        <dbReference type="ChEBI" id="CHEBI:29035"/>
        <label>2</label>
    </ligand>
</feature>
<feature type="binding site" evidence="1">
    <location>
        <begin position="328"/>
        <end position="329"/>
    </location>
    <ligand>
        <name>GMP</name>
        <dbReference type="ChEBI" id="CHEBI:58115"/>
    </ligand>
</feature>
<feature type="binding site" evidence="1">
    <location>
        <position position="328"/>
    </location>
    <ligand>
        <name>Mn(2+)</name>
        <dbReference type="ChEBI" id="CHEBI:29035"/>
        <label>2</label>
    </ligand>
</feature>
<feature type="binding site" evidence="1">
    <location>
        <begin position="377"/>
        <end position="380"/>
    </location>
    <ligand>
        <name>GMP</name>
        <dbReference type="ChEBI" id="CHEBI:58115"/>
    </ligand>
</feature>
<feature type="binding site" evidence="1">
    <location>
        <position position="384"/>
    </location>
    <ligand>
        <name>GMP</name>
        <dbReference type="ChEBI" id="CHEBI:58115"/>
    </ligand>
</feature>
<feature type="binding site" evidence="1">
    <location>
        <begin position="403"/>
        <end position="406"/>
    </location>
    <ligand>
        <name>GMP</name>
        <dbReference type="ChEBI" id="CHEBI:58115"/>
    </ligand>
</feature>
<feature type="binding site" evidence="1">
    <location>
        <position position="479"/>
    </location>
    <ligand>
        <name>GMP</name>
        <dbReference type="ChEBI" id="CHEBI:58115"/>
    </ligand>
</feature>
<name>RTCB_THAPS</name>